<feature type="transit peptide" description="Mitochondrion" evidence="3">
    <location>
        <begin position="1"/>
        <end status="unknown"/>
    </location>
</feature>
<feature type="chain" id="PRO_0000322999" description="Hydroxyacid-oxoacid transhydrogenase, mitochondrial">
    <location>
        <begin status="unknown"/>
        <end position="467"/>
    </location>
</feature>
<feature type="modified residue" description="N6-acetyllysine" evidence="2">
    <location>
        <position position="445"/>
    </location>
</feature>
<feature type="modified residue" description="Phosphoserine" evidence="6">
    <location>
        <position position="452"/>
    </location>
</feature>
<organism>
    <name type="scientific">Rattus norvegicus</name>
    <name type="common">Rat</name>
    <dbReference type="NCBI Taxonomy" id="10116"/>
    <lineage>
        <taxon>Eukaryota</taxon>
        <taxon>Metazoa</taxon>
        <taxon>Chordata</taxon>
        <taxon>Craniata</taxon>
        <taxon>Vertebrata</taxon>
        <taxon>Euteleostomi</taxon>
        <taxon>Mammalia</taxon>
        <taxon>Eutheria</taxon>
        <taxon>Euarchontoglires</taxon>
        <taxon>Glires</taxon>
        <taxon>Rodentia</taxon>
        <taxon>Myomorpha</taxon>
        <taxon>Muroidea</taxon>
        <taxon>Muridae</taxon>
        <taxon>Murinae</taxon>
        <taxon>Rattus</taxon>
    </lineage>
</organism>
<comment type="function">
    <text evidence="1">Catalyzes the cofactor-independent reversible oxidation of gamma-hydroxybutyrate (GHB) to succinic semialdehyde (SSA) coupled to reduction of 2-ketoglutarate (2-KG) to D-2-hydroxyglutarate (D-2-HG). L-3-hydroxybutyrate (L-3-OHB) is also a substrate for HOT when using 2-KG as hydrogen acceptor, resulting in the formation of D-2-HG (By similarity).</text>
</comment>
<comment type="catalytic activity">
    <reaction>
        <text>(S)-3-hydroxybutanoate + 2-oxoglutarate = (R)-2-hydroxyglutarate + acetoacetate</text>
        <dbReference type="Rhea" id="RHEA:23048"/>
        <dbReference type="ChEBI" id="CHEBI:11047"/>
        <dbReference type="ChEBI" id="CHEBI:13705"/>
        <dbReference type="ChEBI" id="CHEBI:15801"/>
        <dbReference type="ChEBI" id="CHEBI:16810"/>
        <dbReference type="EC" id="1.1.99.24"/>
    </reaction>
</comment>
<comment type="catalytic activity">
    <reaction>
        <text>4-hydroxybutanoate + 2-oxoglutarate = (R)-2-hydroxyglutarate + succinate semialdehyde</text>
        <dbReference type="Rhea" id="RHEA:24734"/>
        <dbReference type="ChEBI" id="CHEBI:15801"/>
        <dbReference type="ChEBI" id="CHEBI:16724"/>
        <dbReference type="ChEBI" id="CHEBI:16810"/>
        <dbReference type="ChEBI" id="CHEBI:57706"/>
        <dbReference type="EC" id="1.1.99.24"/>
    </reaction>
</comment>
<comment type="biophysicochemical properties">
    <kinetics>
        <KM evidence="4">0.3 mM for GHB</KM>
        <KM evidence="4">0.4 mM for D-2-HG</KM>
        <KM evidence="4">0.018 mM for 2-KG</KM>
        <KM evidence="4">0.005 mM for SSA</KM>
        <KM evidence="4">3 mM for L-3-OHB</KM>
    </kinetics>
</comment>
<comment type="subcellular location">
    <subcellularLocation>
        <location evidence="4">Mitochondrion</location>
    </subcellularLocation>
</comment>
<comment type="tissue specificity">
    <text evidence="4">Expressed in kidney and liver.</text>
</comment>
<comment type="similarity">
    <text evidence="5">Belongs to the iron-containing alcohol dehydrogenase family. Hydroxyacid-oxoacid transhydrogenase subfamily.</text>
</comment>
<name>HOT_RAT</name>
<dbReference type="EC" id="1.1.99.24"/>
<dbReference type="EMBL" id="BC097945">
    <property type="protein sequence ID" value="AAH97945.1"/>
    <property type="molecule type" value="mRNA"/>
</dbReference>
<dbReference type="RefSeq" id="NP_001020594.1">
    <property type="nucleotide sequence ID" value="NM_001025423.1"/>
</dbReference>
<dbReference type="SMR" id="Q4QQW3"/>
<dbReference type="FunCoup" id="Q4QQW3">
    <property type="interactions" value="297"/>
</dbReference>
<dbReference type="IntAct" id="Q4QQW3">
    <property type="interactions" value="1"/>
</dbReference>
<dbReference type="STRING" id="10116.ENSRNOP00000009462"/>
<dbReference type="GlyGen" id="Q4QQW3">
    <property type="glycosylation" value="1 site"/>
</dbReference>
<dbReference type="iPTMnet" id="Q4QQW3"/>
<dbReference type="PhosphoSitePlus" id="Q4QQW3"/>
<dbReference type="PaxDb" id="10116-ENSRNOP00000009462"/>
<dbReference type="GeneID" id="362474"/>
<dbReference type="KEGG" id="rno:362474"/>
<dbReference type="UCSC" id="RGD:1308863">
    <property type="organism name" value="rat"/>
</dbReference>
<dbReference type="AGR" id="RGD:1308863"/>
<dbReference type="CTD" id="137872"/>
<dbReference type="RGD" id="1308863">
    <property type="gene designation" value="Adhfe1"/>
</dbReference>
<dbReference type="VEuPathDB" id="HostDB:ENSRNOG00000007069"/>
<dbReference type="eggNOG" id="KOG3857">
    <property type="taxonomic scope" value="Eukaryota"/>
</dbReference>
<dbReference type="HOGENOM" id="CLU_007207_0_7_1"/>
<dbReference type="InParanoid" id="Q4QQW3"/>
<dbReference type="OrthoDB" id="19154at9989"/>
<dbReference type="PhylomeDB" id="Q4QQW3"/>
<dbReference type="TreeFam" id="TF105710"/>
<dbReference type="Reactome" id="R-RNO-880009">
    <property type="pathway name" value="Interconversion of 2-oxoglutarate and 2-hydroxyglutarate"/>
</dbReference>
<dbReference type="SABIO-RK" id="Q4QQW3"/>
<dbReference type="PRO" id="PR:Q4QQW3"/>
<dbReference type="Proteomes" id="UP000002494">
    <property type="component" value="Chromosome 5"/>
</dbReference>
<dbReference type="Bgee" id="ENSRNOG00000007069">
    <property type="expression patterns" value="Expressed in liver and 18 other cell types or tissues"/>
</dbReference>
<dbReference type="GO" id="GO:0005739">
    <property type="term" value="C:mitochondrion"/>
    <property type="evidence" value="ECO:0000250"/>
    <property type="project" value="UniProtKB"/>
</dbReference>
<dbReference type="GO" id="GO:0004022">
    <property type="term" value="F:alcohol dehydrogenase (NAD+) activity"/>
    <property type="evidence" value="ECO:0000318"/>
    <property type="project" value="GO_Central"/>
</dbReference>
<dbReference type="GO" id="GO:0047988">
    <property type="term" value="F:hydroxyacid-oxoacid transhydrogenase activity"/>
    <property type="evidence" value="ECO:0000250"/>
    <property type="project" value="UniProtKB"/>
</dbReference>
<dbReference type="GO" id="GO:0046872">
    <property type="term" value="F:metal ion binding"/>
    <property type="evidence" value="ECO:0007669"/>
    <property type="project" value="InterPro"/>
</dbReference>
<dbReference type="GO" id="GO:0019552">
    <property type="term" value="P:glutamate catabolic process via 2-hydroxyglutarate"/>
    <property type="evidence" value="ECO:0000250"/>
    <property type="project" value="UniProtKB"/>
</dbReference>
<dbReference type="GO" id="GO:0006629">
    <property type="term" value="P:lipid metabolic process"/>
    <property type="evidence" value="ECO:0007669"/>
    <property type="project" value="UniProtKB-KW"/>
</dbReference>
<dbReference type="CDD" id="cd08190">
    <property type="entry name" value="HOT"/>
    <property type="match status" value="1"/>
</dbReference>
<dbReference type="FunFam" id="1.20.1090.10:FF:000003">
    <property type="entry name" value="Probable hydroxyacid-oxoacid transhydrogenase, mitochondrial"/>
    <property type="match status" value="1"/>
</dbReference>
<dbReference type="FunFam" id="3.40.50.1970:FF:000010">
    <property type="entry name" value="Probable hydroxyacid-oxoacid transhydrogenase, mitochondrial"/>
    <property type="match status" value="1"/>
</dbReference>
<dbReference type="Gene3D" id="3.40.50.1970">
    <property type="match status" value="1"/>
</dbReference>
<dbReference type="Gene3D" id="1.20.1090.10">
    <property type="entry name" value="Dehydroquinate synthase-like - alpha domain"/>
    <property type="match status" value="1"/>
</dbReference>
<dbReference type="InterPro" id="IPR001670">
    <property type="entry name" value="ADH_Fe/GldA"/>
</dbReference>
<dbReference type="InterPro" id="IPR056798">
    <property type="entry name" value="ADH_Fe_C"/>
</dbReference>
<dbReference type="InterPro" id="IPR039697">
    <property type="entry name" value="Alcohol_dehydrogenase_Fe"/>
</dbReference>
<dbReference type="InterPro" id="IPR042157">
    <property type="entry name" value="HOT"/>
</dbReference>
<dbReference type="PANTHER" id="PTHR11496">
    <property type="entry name" value="ALCOHOL DEHYDROGENASE"/>
    <property type="match status" value="1"/>
</dbReference>
<dbReference type="PANTHER" id="PTHR11496:SF83">
    <property type="entry name" value="HYDROXYACID-OXOACID TRANSHYDROGENASE, MITOCHONDRIAL"/>
    <property type="match status" value="1"/>
</dbReference>
<dbReference type="Pfam" id="PF25137">
    <property type="entry name" value="ADH_Fe_C"/>
    <property type="match status" value="1"/>
</dbReference>
<dbReference type="Pfam" id="PF00465">
    <property type="entry name" value="Fe-ADH"/>
    <property type="match status" value="1"/>
</dbReference>
<dbReference type="SUPFAM" id="SSF56796">
    <property type="entry name" value="Dehydroquinate synthase-like"/>
    <property type="match status" value="1"/>
</dbReference>
<proteinExistence type="evidence at protein level"/>
<reference key="1">
    <citation type="journal article" date="2004" name="Genome Res.">
        <title>The status, quality, and expansion of the NIH full-length cDNA project: the Mammalian Gene Collection (MGC).</title>
        <authorList>
            <consortium name="The MGC Project Team"/>
        </authorList>
    </citation>
    <scope>NUCLEOTIDE SEQUENCE [LARGE SCALE MRNA]</scope>
    <source>
        <tissue>Liver</tissue>
    </source>
</reference>
<reference key="2">
    <citation type="journal article" date="1988" name="J. Biol. Chem.">
        <title>Isolation and characterization of a hydroxyacid-oxoacid transhydrogenase from rat kidney mitochondria.</title>
        <authorList>
            <person name="Kaufman E.E."/>
            <person name="Nelson T."/>
            <person name="Fales H.M."/>
            <person name="Levin D.M."/>
        </authorList>
    </citation>
    <scope>SUBCELLULAR LOCATION</scope>
    <scope>BIOPHYSICOCHEMICAL PROPERTIES</scope>
    <scope>TISSUE SPECIFICITY</scope>
</reference>
<reference key="3">
    <citation type="journal article" date="2012" name="Nat. Commun.">
        <title>Quantitative maps of protein phosphorylation sites across 14 different rat organs and tissues.</title>
        <authorList>
            <person name="Lundby A."/>
            <person name="Secher A."/>
            <person name="Lage K."/>
            <person name="Nordsborg N.B."/>
            <person name="Dmytriyev A."/>
            <person name="Lundby C."/>
            <person name="Olsen J.V."/>
        </authorList>
    </citation>
    <scope>PHOSPHORYLATION [LARGE SCALE ANALYSIS] AT SER-452</scope>
    <scope>IDENTIFICATION BY MASS SPECTROMETRY [LARGE SCALE ANALYSIS]</scope>
</reference>
<gene>
    <name type="primary">Adhfe1</name>
</gene>
<evidence type="ECO:0000250" key="1"/>
<evidence type="ECO:0000250" key="2">
    <source>
        <dbReference type="UniProtKB" id="Q8R0N6"/>
    </source>
</evidence>
<evidence type="ECO:0000255" key="3"/>
<evidence type="ECO:0000269" key="4">
    <source>
    </source>
</evidence>
<evidence type="ECO:0000305" key="5"/>
<evidence type="ECO:0007744" key="6">
    <source>
    </source>
</evidence>
<accession>Q4QQW3</accession>
<keyword id="KW-0007">Acetylation</keyword>
<keyword id="KW-0443">Lipid metabolism</keyword>
<keyword id="KW-0496">Mitochondrion</keyword>
<keyword id="KW-0560">Oxidoreductase</keyword>
<keyword id="KW-0597">Phosphoprotein</keyword>
<keyword id="KW-1185">Reference proteome</keyword>
<keyword id="KW-0809">Transit peptide</keyword>
<sequence>MAAAARARVTHLLRHLQSTACQCPTHSHTYSQVPGLSPSGKTTDYAFEMAVSNIRYGAGVTKEVGMDLQNMGAKNVCLMTDKNLSQLPPVQIVMDSLSKNGISFQVYDNVRVEPTDGSFMDAIEFAKKGAFDAYVAVGGGSTMDTCKAANLYACSPHSEFLDYVNAPIGKGKPVTVPLKPLIAVPTTSGTGSETTGVAIFDYEHLKVKTGIASRAIKPTLGLVDPLHTLHMPCQVVANSGFDVLCHALESYTAIPYSMRSPCPSNPIQRPAYQGSNPISDIWAVHALRIVAKYLKRAVRNPDDLEARSSMHLASAFAGIGFGNAGVHLCHGMSYPISGLVKTYKAKEYNVDHPLVPHGLSVVLTSPAVFTFTAQMFPERHLETAEILGANIRTAKIQDAGPVLADALRKFLFDLNVDDGLAALGYSKDDIPSLVKGTLPQERVTKLAPRAQSEEDLSALFEASMKLY</sequence>
<protein>
    <recommendedName>
        <fullName>Hydroxyacid-oxoacid transhydrogenase, mitochondrial</fullName>
        <shortName>HOT</shortName>
        <ecNumber>1.1.99.24</ecNumber>
    </recommendedName>
    <alternativeName>
        <fullName>Alcohol dehydrogenase iron-containing protein 1</fullName>
        <shortName>ADHFe1</shortName>
    </alternativeName>
</protein>